<accession>Q3BV21</accession>
<gene>
    <name evidence="1" type="primary">rpsF</name>
    <name type="ordered locus">XCV1661</name>
</gene>
<comment type="function">
    <text evidence="1">Binds together with bS18 to 16S ribosomal RNA.</text>
</comment>
<comment type="similarity">
    <text evidence="1">Belongs to the bacterial ribosomal protein bS6 family.</text>
</comment>
<sequence length="143" mass="16355">MSRHYEVVFLVHPDQSEQVPAMIERYKSLIEGGNGTIHRLEDWGRRQLAYPIQNLVKAHYVLLNIEVDQAVLSELVESFRFNDAVLRHLVVKRDGADTEQSLIMKSKDEKGDKPERSERRRRDDEEGEAPAANDNDGDNAEAA</sequence>
<proteinExistence type="inferred from homology"/>
<protein>
    <recommendedName>
        <fullName evidence="1">Small ribosomal subunit protein bS6</fullName>
    </recommendedName>
    <alternativeName>
        <fullName evidence="3">30S ribosomal protein S6</fullName>
    </alternativeName>
</protein>
<name>RS6_XANE5</name>
<feature type="chain" id="PRO_0000229592" description="Small ribosomal subunit protein bS6">
    <location>
        <begin position="1"/>
        <end position="143"/>
    </location>
</feature>
<feature type="region of interest" description="Disordered" evidence="2">
    <location>
        <begin position="98"/>
        <end position="143"/>
    </location>
</feature>
<feature type="compositionally biased region" description="Basic and acidic residues" evidence="2">
    <location>
        <begin position="105"/>
        <end position="124"/>
    </location>
</feature>
<reference key="1">
    <citation type="journal article" date="2005" name="J. Bacteriol.">
        <title>Insights into genome plasticity and pathogenicity of the plant pathogenic Bacterium Xanthomonas campestris pv. vesicatoria revealed by the complete genome sequence.</title>
        <authorList>
            <person name="Thieme F."/>
            <person name="Koebnik R."/>
            <person name="Bekel T."/>
            <person name="Berger C."/>
            <person name="Boch J."/>
            <person name="Buettner D."/>
            <person name="Caldana C."/>
            <person name="Gaigalat L."/>
            <person name="Goesmann A."/>
            <person name="Kay S."/>
            <person name="Kirchner O."/>
            <person name="Lanz C."/>
            <person name="Linke B."/>
            <person name="McHardy A.C."/>
            <person name="Meyer F."/>
            <person name="Mittenhuber G."/>
            <person name="Nies D.H."/>
            <person name="Niesbach-Kloesgen U."/>
            <person name="Patschkowski T."/>
            <person name="Rueckert C."/>
            <person name="Rupp O."/>
            <person name="Schneiker S."/>
            <person name="Schuster S.C."/>
            <person name="Vorhoelter F.J."/>
            <person name="Weber E."/>
            <person name="Puehler A."/>
            <person name="Bonas U."/>
            <person name="Bartels D."/>
            <person name="Kaiser O."/>
        </authorList>
    </citation>
    <scope>NUCLEOTIDE SEQUENCE [LARGE SCALE GENOMIC DNA]</scope>
    <source>
        <strain>85-10</strain>
    </source>
</reference>
<dbReference type="EMBL" id="AM039952">
    <property type="protein sequence ID" value="CAJ23338.1"/>
    <property type="molecule type" value="Genomic_DNA"/>
</dbReference>
<dbReference type="RefSeq" id="WP_003485869.1">
    <property type="nucleotide sequence ID" value="NZ_CP017190.1"/>
</dbReference>
<dbReference type="SMR" id="Q3BV21"/>
<dbReference type="STRING" id="456327.BJD11_14275"/>
<dbReference type="GeneID" id="97510000"/>
<dbReference type="KEGG" id="xcv:XCV1661"/>
<dbReference type="eggNOG" id="COG0360">
    <property type="taxonomic scope" value="Bacteria"/>
</dbReference>
<dbReference type="HOGENOM" id="CLU_113441_6_0_6"/>
<dbReference type="Proteomes" id="UP000007069">
    <property type="component" value="Chromosome"/>
</dbReference>
<dbReference type="GO" id="GO:0022627">
    <property type="term" value="C:cytosolic small ribosomal subunit"/>
    <property type="evidence" value="ECO:0007669"/>
    <property type="project" value="TreeGrafter"/>
</dbReference>
<dbReference type="GO" id="GO:0070181">
    <property type="term" value="F:small ribosomal subunit rRNA binding"/>
    <property type="evidence" value="ECO:0007669"/>
    <property type="project" value="TreeGrafter"/>
</dbReference>
<dbReference type="GO" id="GO:0003735">
    <property type="term" value="F:structural constituent of ribosome"/>
    <property type="evidence" value="ECO:0007669"/>
    <property type="project" value="InterPro"/>
</dbReference>
<dbReference type="GO" id="GO:0006412">
    <property type="term" value="P:translation"/>
    <property type="evidence" value="ECO:0007669"/>
    <property type="project" value="UniProtKB-UniRule"/>
</dbReference>
<dbReference type="CDD" id="cd00473">
    <property type="entry name" value="bS6"/>
    <property type="match status" value="1"/>
</dbReference>
<dbReference type="FunFam" id="3.30.70.60:FF:000003">
    <property type="entry name" value="30S ribosomal protein S6"/>
    <property type="match status" value="1"/>
</dbReference>
<dbReference type="Gene3D" id="3.30.70.60">
    <property type="match status" value="1"/>
</dbReference>
<dbReference type="HAMAP" id="MF_00360">
    <property type="entry name" value="Ribosomal_bS6"/>
    <property type="match status" value="1"/>
</dbReference>
<dbReference type="InterPro" id="IPR000529">
    <property type="entry name" value="Ribosomal_bS6"/>
</dbReference>
<dbReference type="InterPro" id="IPR035980">
    <property type="entry name" value="Ribosomal_bS6_sf"/>
</dbReference>
<dbReference type="InterPro" id="IPR020814">
    <property type="entry name" value="Ribosomal_S6_plastid/chlpt"/>
</dbReference>
<dbReference type="InterPro" id="IPR014717">
    <property type="entry name" value="Transl_elong_EF1B/ribsomal_bS6"/>
</dbReference>
<dbReference type="NCBIfam" id="TIGR00166">
    <property type="entry name" value="S6"/>
    <property type="match status" value="1"/>
</dbReference>
<dbReference type="PANTHER" id="PTHR21011">
    <property type="entry name" value="MITOCHONDRIAL 28S RIBOSOMAL PROTEIN S6"/>
    <property type="match status" value="1"/>
</dbReference>
<dbReference type="PANTHER" id="PTHR21011:SF1">
    <property type="entry name" value="SMALL RIBOSOMAL SUBUNIT PROTEIN BS6M"/>
    <property type="match status" value="1"/>
</dbReference>
<dbReference type="Pfam" id="PF01250">
    <property type="entry name" value="Ribosomal_S6"/>
    <property type="match status" value="1"/>
</dbReference>
<dbReference type="SUPFAM" id="SSF54995">
    <property type="entry name" value="Ribosomal protein S6"/>
    <property type="match status" value="1"/>
</dbReference>
<evidence type="ECO:0000255" key="1">
    <source>
        <dbReference type="HAMAP-Rule" id="MF_00360"/>
    </source>
</evidence>
<evidence type="ECO:0000256" key="2">
    <source>
        <dbReference type="SAM" id="MobiDB-lite"/>
    </source>
</evidence>
<evidence type="ECO:0000305" key="3"/>
<keyword id="KW-0687">Ribonucleoprotein</keyword>
<keyword id="KW-0689">Ribosomal protein</keyword>
<keyword id="KW-0694">RNA-binding</keyword>
<keyword id="KW-0699">rRNA-binding</keyword>
<organism>
    <name type="scientific">Xanthomonas euvesicatoria pv. vesicatoria (strain 85-10)</name>
    <name type="common">Xanthomonas campestris pv. vesicatoria</name>
    <dbReference type="NCBI Taxonomy" id="316273"/>
    <lineage>
        <taxon>Bacteria</taxon>
        <taxon>Pseudomonadati</taxon>
        <taxon>Pseudomonadota</taxon>
        <taxon>Gammaproteobacteria</taxon>
        <taxon>Lysobacterales</taxon>
        <taxon>Lysobacteraceae</taxon>
        <taxon>Xanthomonas</taxon>
    </lineage>
</organism>